<keyword id="KW-0963">Cytoplasm</keyword>
<keyword id="KW-0488">Methylation</keyword>
<keyword id="KW-0648">Protein biosynthesis</keyword>
<organism>
    <name type="scientific">Yersinia pestis (strain Pestoides F)</name>
    <dbReference type="NCBI Taxonomy" id="386656"/>
    <lineage>
        <taxon>Bacteria</taxon>
        <taxon>Pseudomonadati</taxon>
        <taxon>Pseudomonadota</taxon>
        <taxon>Gammaproteobacteria</taxon>
        <taxon>Enterobacterales</taxon>
        <taxon>Yersiniaceae</taxon>
        <taxon>Yersinia</taxon>
    </lineage>
</organism>
<dbReference type="EMBL" id="CP000668">
    <property type="protein sequence ID" value="ABP39499.1"/>
    <property type="molecule type" value="Genomic_DNA"/>
</dbReference>
<dbReference type="RefSeq" id="WP_002211236.1">
    <property type="nucleotide sequence ID" value="NZ_CP009715.1"/>
</dbReference>
<dbReference type="SMR" id="A4TJN7"/>
<dbReference type="GeneID" id="57976644"/>
<dbReference type="KEGG" id="ypp:YPDSF_1101"/>
<dbReference type="PATRIC" id="fig|386656.14.peg.2731"/>
<dbReference type="GO" id="GO:0005737">
    <property type="term" value="C:cytoplasm"/>
    <property type="evidence" value="ECO:0007669"/>
    <property type="project" value="UniProtKB-SubCell"/>
</dbReference>
<dbReference type="GO" id="GO:0016149">
    <property type="term" value="F:translation release factor activity, codon specific"/>
    <property type="evidence" value="ECO:0007669"/>
    <property type="project" value="UniProtKB-UniRule"/>
</dbReference>
<dbReference type="FunFam" id="3.30.160.20:FF:000004">
    <property type="entry name" value="Peptide chain release factor 1"/>
    <property type="match status" value="1"/>
</dbReference>
<dbReference type="FunFam" id="3.30.70.1660:FF:000002">
    <property type="entry name" value="Peptide chain release factor 1"/>
    <property type="match status" value="1"/>
</dbReference>
<dbReference type="FunFam" id="3.30.70.1660:FF:000004">
    <property type="entry name" value="Peptide chain release factor 1"/>
    <property type="match status" value="1"/>
</dbReference>
<dbReference type="Gene3D" id="3.30.160.20">
    <property type="match status" value="1"/>
</dbReference>
<dbReference type="Gene3D" id="3.30.70.1660">
    <property type="match status" value="1"/>
</dbReference>
<dbReference type="Gene3D" id="6.10.140.1950">
    <property type="match status" value="1"/>
</dbReference>
<dbReference type="HAMAP" id="MF_00093">
    <property type="entry name" value="Rel_fac_1"/>
    <property type="match status" value="1"/>
</dbReference>
<dbReference type="InterPro" id="IPR005139">
    <property type="entry name" value="PCRF"/>
</dbReference>
<dbReference type="InterPro" id="IPR000352">
    <property type="entry name" value="Pep_chain_release_fac_I"/>
</dbReference>
<dbReference type="InterPro" id="IPR045853">
    <property type="entry name" value="Pep_chain_release_fac_I_sf"/>
</dbReference>
<dbReference type="InterPro" id="IPR050057">
    <property type="entry name" value="Prokaryotic/Mito_RF"/>
</dbReference>
<dbReference type="InterPro" id="IPR004373">
    <property type="entry name" value="RF-1"/>
</dbReference>
<dbReference type="NCBIfam" id="TIGR00019">
    <property type="entry name" value="prfA"/>
    <property type="match status" value="1"/>
</dbReference>
<dbReference type="NCBIfam" id="NF001859">
    <property type="entry name" value="PRK00591.1"/>
    <property type="match status" value="1"/>
</dbReference>
<dbReference type="PANTHER" id="PTHR43804">
    <property type="entry name" value="LD18447P"/>
    <property type="match status" value="1"/>
</dbReference>
<dbReference type="PANTHER" id="PTHR43804:SF7">
    <property type="entry name" value="LD18447P"/>
    <property type="match status" value="1"/>
</dbReference>
<dbReference type="Pfam" id="PF03462">
    <property type="entry name" value="PCRF"/>
    <property type="match status" value="1"/>
</dbReference>
<dbReference type="Pfam" id="PF00472">
    <property type="entry name" value="RF-1"/>
    <property type="match status" value="1"/>
</dbReference>
<dbReference type="SMART" id="SM00937">
    <property type="entry name" value="PCRF"/>
    <property type="match status" value="1"/>
</dbReference>
<dbReference type="SUPFAM" id="SSF75620">
    <property type="entry name" value="Release factor"/>
    <property type="match status" value="1"/>
</dbReference>
<dbReference type="PROSITE" id="PS00745">
    <property type="entry name" value="RF_PROK_I"/>
    <property type="match status" value="1"/>
</dbReference>
<feature type="chain" id="PRO_1000004968" description="Peptide chain release factor 1">
    <location>
        <begin position="1"/>
        <end position="360"/>
    </location>
</feature>
<feature type="region of interest" description="Disordered" evidence="2">
    <location>
        <begin position="291"/>
        <end position="312"/>
    </location>
</feature>
<feature type="compositionally biased region" description="Basic and acidic residues" evidence="2">
    <location>
        <begin position="291"/>
        <end position="308"/>
    </location>
</feature>
<feature type="modified residue" description="N5-methylglutamine" evidence="1">
    <location>
        <position position="235"/>
    </location>
</feature>
<comment type="function">
    <text evidence="1">Peptide chain release factor 1 directs the termination of translation in response to the peptide chain termination codons UAG and UAA.</text>
</comment>
<comment type="subcellular location">
    <subcellularLocation>
        <location evidence="1">Cytoplasm</location>
    </subcellularLocation>
</comment>
<comment type="PTM">
    <text evidence="1">Methylated by PrmC. Methylation increases the termination efficiency of RF1.</text>
</comment>
<comment type="similarity">
    <text evidence="1">Belongs to the prokaryotic/mitochondrial release factor family.</text>
</comment>
<accession>A4TJN7</accession>
<sequence length="360" mass="40564">MKSSIVAKLEALQERHEEVLAYLGDASVIADQDRFRALSREYAQLTDVTRCFKEWRSAQDDIEAAEMMLDDLEMREMAQEELKIAKARSEELEQQLQVLLLPKDPDDERDCFLEIRAGTGGDEAAIFAGDMFRMYSRYAETRRWKVEIMSASEGEHGGYKEIIAKISGDGVFGQLKFESGGHRVQRVPETESQGRIHTSACTVAVMPAIPEAELPEINAGDLRIDTFRSSGAGGQHVNTTDSAIRITHIPTGIVVECQDERSQHKNKAKAMSVLGARIRAAEMQKRQLAEASERRNLLGTGDRSDRNRTYNFPQGRVTDHRINLTLYRLDEVMEGKLDMLIQPIVQEYQADQLSALSEQD</sequence>
<gene>
    <name evidence="1" type="primary">prfA</name>
    <name type="ordered locus">YPDSF_1101</name>
</gene>
<proteinExistence type="inferred from homology"/>
<reference key="1">
    <citation type="submission" date="2007-02" db="EMBL/GenBank/DDBJ databases">
        <title>Complete sequence of chromosome of Yersinia pestis Pestoides F.</title>
        <authorList>
            <consortium name="US DOE Joint Genome Institute"/>
            <person name="Copeland A."/>
            <person name="Lucas S."/>
            <person name="Lapidus A."/>
            <person name="Barry K."/>
            <person name="Detter J.C."/>
            <person name="Glavina del Rio T."/>
            <person name="Hammon N."/>
            <person name="Israni S."/>
            <person name="Dalin E."/>
            <person name="Tice H."/>
            <person name="Pitluck S."/>
            <person name="Di Bartolo G."/>
            <person name="Chain P."/>
            <person name="Malfatti S."/>
            <person name="Shin M."/>
            <person name="Vergez L."/>
            <person name="Schmutz J."/>
            <person name="Larimer F."/>
            <person name="Land M."/>
            <person name="Hauser L."/>
            <person name="Worsham P."/>
            <person name="Chu M."/>
            <person name="Bearden S."/>
            <person name="Garcia E."/>
            <person name="Richardson P."/>
        </authorList>
    </citation>
    <scope>NUCLEOTIDE SEQUENCE [LARGE SCALE GENOMIC DNA]</scope>
    <source>
        <strain>Pestoides F</strain>
    </source>
</reference>
<name>RF1_YERPP</name>
<evidence type="ECO:0000255" key="1">
    <source>
        <dbReference type="HAMAP-Rule" id="MF_00093"/>
    </source>
</evidence>
<evidence type="ECO:0000256" key="2">
    <source>
        <dbReference type="SAM" id="MobiDB-lite"/>
    </source>
</evidence>
<protein>
    <recommendedName>
        <fullName evidence="1">Peptide chain release factor 1</fullName>
        <shortName evidence="1">RF-1</shortName>
    </recommendedName>
</protein>